<feature type="chain" id="PRO_0000095593" description="Zinc uptake regulation protein">
    <location>
        <begin position="1"/>
        <end position="171"/>
    </location>
</feature>
<organism>
    <name type="scientific">Shigella flexneri</name>
    <dbReference type="NCBI Taxonomy" id="623"/>
    <lineage>
        <taxon>Bacteria</taxon>
        <taxon>Pseudomonadati</taxon>
        <taxon>Pseudomonadota</taxon>
        <taxon>Gammaproteobacteria</taxon>
        <taxon>Enterobacterales</taxon>
        <taxon>Enterobacteriaceae</taxon>
        <taxon>Shigella</taxon>
    </lineage>
</organism>
<comment type="function">
    <text evidence="1">Acts as a negative controlling element, employing Zn(2+) as a cofactor to bind the operator of the repressed genes (znuACB).</text>
</comment>
<comment type="similarity">
    <text evidence="2">Belongs to the Fur family.</text>
</comment>
<comment type="sequence caution" evidence="2">
    <conflict type="erroneous initiation">
        <sequence resource="EMBL-CDS" id="AAN45581"/>
    </conflict>
</comment>
<comment type="sequence caution" evidence="2">
    <conflict type="erroneous initiation">
        <sequence resource="EMBL-CDS" id="AAP18618"/>
    </conflict>
</comment>
<name>ZUR_SHIFL</name>
<evidence type="ECO:0000250" key="1"/>
<evidence type="ECO:0000305" key="2"/>
<sequence>MEKTTTQELLAQAEKICAQRNVRLTPQRLEVLRLMSLQDGAISAYDLLDLLREAEPQAKPPTVYRALDFLLEQGFVHKVESTNSYVLCHLFDQPTHTSAMFICDRCGAVKEECAEGVEDIMHTLAAKMGFALRHNVIEAHGLCAACVEVEACRHPEQCQHDHSVQVKKKPR</sequence>
<protein>
    <recommendedName>
        <fullName>Zinc uptake regulation protein</fullName>
        <shortName>Zinc uptake regulator</shortName>
    </recommendedName>
</protein>
<dbReference type="EMBL" id="AE005674">
    <property type="protein sequence ID" value="AAN45581.1"/>
    <property type="status" value="ALT_INIT"/>
    <property type="molecule type" value="Genomic_DNA"/>
</dbReference>
<dbReference type="EMBL" id="AE014073">
    <property type="protein sequence ID" value="AAP18618.1"/>
    <property type="status" value="ALT_INIT"/>
    <property type="molecule type" value="Genomic_DNA"/>
</dbReference>
<dbReference type="RefSeq" id="WP_001295691.1">
    <property type="nucleotide sequence ID" value="NZ_WPGW01000150.1"/>
</dbReference>
<dbReference type="SMR" id="P0AC52"/>
<dbReference type="STRING" id="198214.SF4159"/>
<dbReference type="PaxDb" id="198214-SF4159"/>
<dbReference type="GeneID" id="93777785"/>
<dbReference type="KEGG" id="sfl:SF4159"/>
<dbReference type="KEGG" id="sfx:S3572"/>
<dbReference type="PATRIC" id="fig|198214.7.peg.4907"/>
<dbReference type="HOGENOM" id="CLU_096072_2_1_6"/>
<dbReference type="Proteomes" id="UP000001006">
    <property type="component" value="Chromosome"/>
</dbReference>
<dbReference type="Proteomes" id="UP000002673">
    <property type="component" value="Chromosome"/>
</dbReference>
<dbReference type="GO" id="GO:0005829">
    <property type="term" value="C:cytosol"/>
    <property type="evidence" value="ECO:0007669"/>
    <property type="project" value="TreeGrafter"/>
</dbReference>
<dbReference type="GO" id="GO:0003700">
    <property type="term" value="F:DNA-binding transcription factor activity"/>
    <property type="evidence" value="ECO:0007669"/>
    <property type="project" value="InterPro"/>
</dbReference>
<dbReference type="GO" id="GO:0000976">
    <property type="term" value="F:transcription cis-regulatory region binding"/>
    <property type="evidence" value="ECO:0007669"/>
    <property type="project" value="TreeGrafter"/>
</dbReference>
<dbReference type="GO" id="GO:0008270">
    <property type="term" value="F:zinc ion binding"/>
    <property type="evidence" value="ECO:0007669"/>
    <property type="project" value="TreeGrafter"/>
</dbReference>
<dbReference type="GO" id="GO:0045892">
    <property type="term" value="P:negative regulation of DNA-templated transcription"/>
    <property type="evidence" value="ECO:0007669"/>
    <property type="project" value="TreeGrafter"/>
</dbReference>
<dbReference type="GO" id="GO:1900376">
    <property type="term" value="P:regulation of secondary metabolite biosynthetic process"/>
    <property type="evidence" value="ECO:0007669"/>
    <property type="project" value="TreeGrafter"/>
</dbReference>
<dbReference type="CDD" id="cd07153">
    <property type="entry name" value="Fur_like"/>
    <property type="match status" value="1"/>
</dbReference>
<dbReference type="FunFam" id="1.10.10.10:FF:000137">
    <property type="entry name" value="Zinc uptake transcriptional repressor"/>
    <property type="match status" value="1"/>
</dbReference>
<dbReference type="FunFam" id="3.30.1490.190:FF:000002">
    <property type="entry name" value="Zinc uptake transcriptional repressor"/>
    <property type="match status" value="1"/>
</dbReference>
<dbReference type="Gene3D" id="3.30.1490.190">
    <property type="match status" value="1"/>
</dbReference>
<dbReference type="Gene3D" id="1.10.10.10">
    <property type="entry name" value="Winged helix-like DNA-binding domain superfamily/Winged helix DNA-binding domain"/>
    <property type="match status" value="1"/>
</dbReference>
<dbReference type="InterPro" id="IPR002481">
    <property type="entry name" value="FUR"/>
</dbReference>
<dbReference type="InterPro" id="IPR043135">
    <property type="entry name" value="Fur_C"/>
</dbReference>
<dbReference type="InterPro" id="IPR036388">
    <property type="entry name" value="WH-like_DNA-bd_sf"/>
</dbReference>
<dbReference type="InterPro" id="IPR036390">
    <property type="entry name" value="WH_DNA-bd_sf"/>
</dbReference>
<dbReference type="NCBIfam" id="NF008646">
    <property type="entry name" value="PRK11639.1"/>
    <property type="match status" value="1"/>
</dbReference>
<dbReference type="PANTHER" id="PTHR33202">
    <property type="entry name" value="ZINC UPTAKE REGULATION PROTEIN"/>
    <property type="match status" value="1"/>
</dbReference>
<dbReference type="PANTHER" id="PTHR33202:SF6">
    <property type="entry name" value="ZINC UPTAKE REGULATION PROTEIN"/>
    <property type="match status" value="1"/>
</dbReference>
<dbReference type="Pfam" id="PF01475">
    <property type="entry name" value="FUR"/>
    <property type="match status" value="1"/>
</dbReference>
<dbReference type="SUPFAM" id="SSF46785">
    <property type="entry name" value="Winged helix' DNA-binding domain"/>
    <property type="match status" value="1"/>
</dbReference>
<keyword id="KW-0238">DNA-binding</keyword>
<keyword id="KW-1185">Reference proteome</keyword>
<keyword id="KW-0678">Repressor</keyword>
<keyword id="KW-0804">Transcription</keyword>
<keyword id="KW-0805">Transcription regulation</keyword>
<keyword id="KW-0862">Zinc</keyword>
<reference key="1">
    <citation type="journal article" date="2002" name="Nucleic Acids Res.">
        <title>Genome sequence of Shigella flexneri 2a: insights into pathogenicity through comparison with genomes of Escherichia coli K12 and O157.</title>
        <authorList>
            <person name="Jin Q."/>
            <person name="Yuan Z."/>
            <person name="Xu J."/>
            <person name="Wang Y."/>
            <person name="Shen Y."/>
            <person name="Lu W."/>
            <person name="Wang J."/>
            <person name="Liu H."/>
            <person name="Yang J."/>
            <person name="Yang F."/>
            <person name="Zhang X."/>
            <person name="Zhang J."/>
            <person name="Yang G."/>
            <person name="Wu H."/>
            <person name="Qu D."/>
            <person name="Dong J."/>
            <person name="Sun L."/>
            <person name="Xue Y."/>
            <person name="Zhao A."/>
            <person name="Gao Y."/>
            <person name="Zhu J."/>
            <person name="Kan B."/>
            <person name="Ding K."/>
            <person name="Chen S."/>
            <person name="Cheng H."/>
            <person name="Yao Z."/>
            <person name="He B."/>
            <person name="Chen R."/>
            <person name="Ma D."/>
            <person name="Qiang B."/>
            <person name="Wen Y."/>
            <person name="Hou Y."/>
            <person name="Yu J."/>
        </authorList>
    </citation>
    <scope>NUCLEOTIDE SEQUENCE [LARGE SCALE GENOMIC DNA]</scope>
    <source>
        <strain>301 / Serotype 2a</strain>
    </source>
</reference>
<reference key="2">
    <citation type="journal article" date="2003" name="Infect. Immun.">
        <title>Complete genome sequence and comparative genomics of Shigella flexneri serotype 2a strain 2457T.</title>
        <authorList>
            <person name="Wei J."/>
            <person name="Goldberg M.B."/>
            <person name="Burland V."/>
            <person name="Venkatesan M.M."/>
            <person name="Deng W."/>
            <person name="Fournier G."/>
            <person name="Mayhew G.F."/>
            <person name="Plunkett G. III"/>
            <person name="Rose D.J."/>
            <person name="Darling A."/>
            <person name="Mau B."/>
            <person name="Perna N.T."/>
            <person name="Payne S.M."/>
            <person name="Runyen-Janecky L.J."/>
            <person name="Zhou S."/>
            <person name="Schwartz D.C."/>
            <person name="Blattner F.R."/>
        </authorList>
    </citation>
    <scope>NUCLEOTIDE SEQUENCE [LARGE SCALE GENOMIC DNA]</scope>
    <source>
        <strain>ATCC 700930 / 2457T / Serotype 2a</strain>
    </source>
</reference>
<proteinExistence type="inferred from homology"/>
<accession>P0AC52</accession>
<accession>P32692</accession>
<accession>P76784</accession>
<gene>
    <name type="primary">zur</name>
    <name type="ordered locus">SF4159</name>
    <name type="ordered locus">S3572</name>
</gene>